<comment type="function">
    <text evidence="1">Essential regulatory subunit of the mitochondrial calcium uniporter complex (uniplex), a complex that mediates calcium uptake into mitochondria. Required to bridge the calcium-sensing proteins micu1 with the calcium-conducting subunit mcu. Acts by mediating activation of mcu and retention of micu1 to the mcu pore, in order to ensure tight regulation of the uniplex complex and appropriate responses to intracellular calcium signaling.</text>
</comment>
<comment type="subunit">
    <text evidence="1">Component of the uniplex complex.</text>
</comment>
<comment type="subcellular location">
    <subcellularLocation>
        <location evidence="1">Mitochondrion inner membrane</location>
        <topology evidence="1">Single-pass membrane protein</topology>
    </subcellularLocation>
</comment>
<comment type="similarity">
    <text evidence="4">Belongs to the SMDT1/EMRE family.</text>
</comment>
<sequence>MAARVGVLSVAGFRAAARAGGLLRASKQSSAVSHVPCRTAIATSAGTVLPKPEKVSFGLLRVFTVVIPFLYIGTLISKNFAALLEEHDIFVPEDDDDDD</sequence>
<organism>
    <name type="scientific">Xenopus tropicalis</name>
    <name type="common">Western clawed frog</name>
    <name type="synonym">Silurana tropicalis</name>
    <dbReference type="NCBI Taxonomy" id="8364"/>
    <lineage>
        <taxon>Eukaryota</taxon>
        <taxon>Metazoa</taxon>
        <taxon>Chordata</taxon>
        <taxon>Craniata</taxon>
        <taxon>Vertebrata</taxon>
        <taxon>Euteleostomi</taxon>
        <taxon>Amphibia</taxon>
        <taxon>Batrachia</taxon>
        <taxon>Anura</taxon>
        <taxon>Pipoidea</taxon>
        <taxon>Pipidae</taxon>
        <taxon>Xenopodinae</taxon>
        <taxon>Xenopus</taxon>
        <taxon>Silurana</taxon>
    </lineage>
</organism>
<name>EMRE_XENTR</name>
<accession>Q28ED6</accession>
<accession>A8WGX2</accession>
<accession>G1K3M5</accession>
<accession>Q5RJJ4</accession>
<evidence type="ECO:0000250" key="1">
    <source>
        <dbReference type="UniProtKB" id="Q9H4I9"/>
    </source>
</evidence>
<evidence type="ECO:0000255" key="2"/>
<evidence type="ECO:0000303" key="3">
    <source ref="2"/>
</evidence>
<evidence type="ECO:0000305" key="4"/>
<keyword id="KW-0106">Calcium</keyword>
<keyword id="KW-0109">Calcium transport</keyword>
<keyword id="KW-0406">Ion transport</keyword>
<keyword id="KW-0472">Membrane</keyword>
<keyword id="KW-0496">Mitochondrion</keyword>
<keyword id="KW-0999">Mitochondrion inner membrane</keyword>
<keyword id="KW-1185">Reference proteome</keyword>
<keyword id="KW-0809">Transit peptide</keyword>
<keyword id="KW-0812">Transmembrane</keyword>
<keyword id="KW-1133">Transmembrane helix</keyword>
<keyword id="KW-0813">Transport</keyword>
<reference key="1">
    <citation type="journal article" date="2010" name="Science">
        <title>The genome of the Western clawed frog Xenopus tropicalis.</title>
        <authorList>
            <person name="Hellsten U."/>
            <person name="Harland R.M."/>
            <person name="Gilchrist M.J."/>
            <person name="Hendrix D."/>
            <person name="Jurka J."/>
            <person name="Kapitonov V."/>
            <person name="Ovcharenko I."/>
            <person name="Putnam N.H."/>
            <person name="Shu S."/>
            <person name="Taher L."/>
            <person name="Blitz I.L."/>
            <person name="Blumberg B."/>
            <person name="Dichmann D.S."/>
            <person name="Dubchak I."/>
            <person name="Amaya E."/>
            <person name="Detter J.C."/>
            <person name="Fletcher R."/>
            <person name="Gerhard D.S."/>
            <person name="Goodstein D."/>
            <person name="Graves T."/>
            <person name="Grigoriev I.V."/>
            <person name="Grimwood J."/>
            <person name="Kawashima T."/>
            <person name="Lindquist E."/>
            <person name="Lucas S.M."/>
            <person name="Mead P.E."/>
            <person name="Mitros T."/>
            <person name="Ogino H."/>
            <person name="Ohta Y."/>
            <person name="Poliakov A.V."/>
            <person name="Pollet N."/>
            <person name="Robert J."/>
            <person name="Salamov A."/>
            <person name="Sater A.K."/>
            <person name="Schmutz J."/>
            <person name="Terry A."/>
            <person name="Vize P.D."/>
            <person name="Warren W.C."/>
            <person name="Wells D."/>
            <person name="Wills A."/>
            <person name="Wilson R.K."/>
            <person name="Zimmerman L.B."/>
            <person name="Zorn A.M."/>
            <person name="Grainger R."/>
            <person name="Grammer T."/>
            <person name="Khokha M.K."/>
            <person name="Richardson P.M."/>
            <person name="Rokhsar D.S."/>
        </authorList>
    </citation>
    <scope>NUCLEOTIDE SEQUENCE [LARGE SCALE GENOMIC DNA]</scope>
</reference>
<reference key="2">
    <citation type="submission" date="2006-10" db="EMBL/GenBank/DDBJ databases">
        <authorList>
            <consortium name="Sanger Xenopus tropicalis EST/cDNA project"/>
        </authorList>
    </citation>
    <scope>NUCLEOTIDE SEQUENCE [LARGE SCALE MRNA]</scope>
    <source>
        <tissue>Neurula</tissue>
    </source>
</reference>
<reference key="3">
    <citation type="submission" date="2004-11" db="EMBL/GenBank/DDBJ databases">
        <authorList>
            <consortium name="NIH - Xenopus Gene Collection (XGC) project"/>
        </authorList>
    </citation>
    <scope>NUCLEOTIDE SEQUENCE [LARGE SCALE MRNA]</scope>
    <source>
        <strain>F6</strain>
        <strain>N6</strain>
        <tissue>Skeletal muscle</tissue>
    </source>
</reference>
<dbReference type="EMBL" id="AAMC01036765">
    <property type="status" value="NOT_ANNOTATED_CDS"/>
    <property type="molecule type" value="Genomic_DNA"/>
</dbReference>
<dbReference type="EMBL" id="CR848311">
    <property type="protein sequence ID" value="CAJ83012.1"/>
    <property type="molecule type" value="mRNA"/>
</dbReference>
<dbReference type="EMBL" id="BC086613">
    <property type="protein sequence ID" value="AAH86613.1"/>
    <property type="molecule type" value="mRNA"/>
</dbReference>
<dbReference type="EMBL" id="BC154887">
    <property type="protein sequence ID" value="AAI54888.1"/>
    <property type="molecule type" value="mRNA"/>
</dbReference>
<dbReference type="RefSeq" id="NP_001107674.1">
    <property type="nucleotide sequence ID" value="NM_001114202.1"/>
</dbReference>
<dbReference type="SMR" id="Q28ED6"/>
<dbReference type="FunCoup" id="Q28ED6">
    <property type="interactions" value="774"/>
</dbReference>
<dbReference type="STRING" id="8364.ENSXETP00000029647"/>
<dbReference type="PaxDb" id="8364-ENSXETP00000057052"/>
<dbReference type="DNASU" id="496604"/>
<dbReference type="GeneID" id="496604"/>
<dbReference type="KEGG" id="xtr:496604"/>
<dbReference type="AGR" id="Xenbase:XB-GENE-1002274"/>
<dbReference type="CTD" id="91689"/>
<dbReference type="Xenbase" id="XB-GENE-1002274">
    <property type="gene designation" value="smdt1"/>
</dbReference>
<dbReference type="eggNOG" id="KOG4542">
    <property type="taxonomic scope" value="Eukaryota"/>
</dbReference>
<dbReference type="HOGENOM" id="CLU_172921_1_0_1"/>
<dbReference type="InParanoid" id="Q28ED6"/>
<dbReference type="OMA" id="NISKHEH"/>
<dbReference type="OrthoDB" id="10039145at2759"/>
<dbReference type="PhylomeDB" id="Q28ED6"/>
<dbReference type="TreeFam" id="TF314649"/>
<dbReference type="Proteomes" id="UP000008143">
    <property type="component" value="Chromosome 4"/>
</dbReference>
<dbReference type="GO" id="GO:0005743">
    <property type="term" value="C:mitochondrial inner membrane"/>
    <property type="evidence" value="ECO:0000250"/>
    <property type="project" value="UniProtKB"/>
</dbReference>
<dbReference type="GO" id="GO:1990246">
    <property type="term" value="C:uniplex complex"/>
    <property type="evidence" value="ECO:0000250"/>
    <property type="project" value="UniProtKB"/>
</dbReference>
<dbReference type="GO" id="GO:0099103">
    <property type="term" value="F:channel activator activity"/>
    <property type="evidence" value="ECO:0000250"/>
    <property type="project" value="UniProtKB"/>
</dbReference>
<dbReference type="GO" id="GO:0030674">
    <property type="term" value="F:protein-macromolecule adaptor activity"/>
    <property type="evidence" value="ECO:0000250"/>
    <property type="project" value="UniProtKB"/>
</dbReference>
<dbReference type="GO" id="GO:0036444">
    <property type="term" value="P:calcium import into the mitochondrion"/>
    <property type="evidence" value="ECO:0000250"/>
    <property type="project" value="UniProtKB"/>
</dbReference>
<dbReference type="GO" id="GO:0051560">
    <property type="term" value="P:mitochondrial calcium ion homeostasis"/>
    <property type="evidence" value="ECO:0000250"/>
    <property type="project" value="UniProtKB"/>
</dbReference>
<dbReference type="GO" id="GO:0006851">
    <property type="term" value="P:mitochondrial calcium ion transmembrane transport"/>
    <property type="evidence" value="ECO:0000250"/>
    <property type="project" value="UniProtKB"/>
</dbReference>
<dbReference type="InterPro" id="IPR018782">
    <property type="entry name" value="MCU_reg"/>
</dbReference>
<dbReference type="PANTHER" id="PTHR33904">
    <property type="entry name" value="ESSENTIAL MCU REGULATOR, MITOCHONDRIAL"/>
    <property type="match status" value="1"/>
</dbReference>
<dbReference type="PANTHER" id="PTHR33904:SF1">
    <property type="entry name" value="ESSENTIAL MCU REGULATOR, MITOCHONDRIAL"/>
    <property type="match status" value="1"/>
</dbReference>
<dbReference type="Pfam" id="PF10161">
    <property type="entry name" value="DDDD"/>
    <property type="match status" value="1"/>
</dbReference>
<gene>
    <name evidence="1" type="primary">smdt1</name>
    <name evidence="1" type="synonym">emre</name>
    <name evidence="3" type="ORF">TNeu133h13.1</name>
</gene>
<feature type="transit peptide" description="Mitochondrion" evidence="2">
    <location>
        <begin position="1"/>
        <end position="39"/>
    </location>
</feature>
<feature type="chain" id="PRO_0000296324" description="Essential MCU regulator, mitochondrial">
    <location>
        <begin position="40"/>
        <end position="99"/>
    </location>
</feature>
<feature type="topological domain" description="Mitochondrial matrix" evidence="4">
    <location>
        <begin position="40"/>
        <end position="57"/>
    </location>
</feature>
<feature type="transmembrane region" description="Helical" evidence="1">
    <location>
        <begin position="58"/>
        <end position="77"/>
    </location>
</feature>
<feature type="topological domain" description="Mitochondrial intermembrane" evidence="4">
    <location>
        <begin position="78"/>
        <end position="99"/>
    </location>
</feature>
<protein>
    <recommendedName>
        <fullName evidence="1">Essential MCU regulator, mitochondrial</fullName>
    </recommendedName>
    <alternativeName>
        <fullName evidence="1">Single-pass membrane protein with aspartate-rich tail 1, mitochondrial</fullName>
    </alternativeName>
</protein>
<proteinExistence type="inferred from homology"/>